<feature type="signal peptide" evidence="2">
    <location>
        <begin position="1"/>
        <end status="unknown"/>
    </location>
</feature>
<feature type="chain" id="PRO_0000411759" description="Probable zinc metalloprotease Lema_P086240">
    <location>
        <begin status="unknown"/>
        <end position="431"/>
    </location>
</feature>
<feature type="domain" description="Fibronectin type-III">
    <location>
        <begin position="344"/>
        <end position="431"/>
    </location>
</feature>
<feature type="binding site" evidence="1">
    <location>
        <position position="117"/>
    </location>
    <ligand>
        <name>Zn(2+)</name>
        <dbReference type="ChEBI" id="CHEBI:29105"/>
        <label>1</label>
    </ligand>
</feature>
<feature type="binding site" evidence="1">
    <location>
        <position position="137"/>
    </location>
    <ligand>
        <name>Zn(2+)</name>
        <dbReference type="ChEBI" id="CHEBI:29105"/>
        <label>1</label>
    </ligand>
</feature>
<feature type="binding site" evidence="1">
    <location>
        <position position="137"/>
    </location>
    <ligand>
        <name>Zn(2+)</name>
        <dbReference type="ChEBI" id="CHEBI:29105"/>
        <label>2</label>
        <note>catalytic</note>
    </ligand>
</feature>
<feature type="binding site" evidence="1">
    <location>
        <position position="170"/>
    </location>
    <ligand>
        <name>Zn(2+)</name>
        <dbReference type="ChEBI" id="CHEBI:29105"/>
        <label>2</label>
        <note>catalytic</note>
    </ligand>
</feature>
<feature type="binding site" evidence="1">
    <location>
        <position position="197"/>
    </location>
    <ligand>
        <name>Zn(2+)</name>
        <dbReference type="ChEBI" id="CHEBI:29105"/>
        <label>1</label>
    </ligand>
</feature>
<feature type="glycosylation site" description="N-linked (GlcNAc...) asparagine" evidence="2">
    <location>
        <position position="46"/>
    </location>
</feature>
<feature type="glycosylation site" description="N-linked (GlcNAc...) asparagine" evidence="2">
    <location>
        <position position="185"/>
    </location>
</feature>
<feature type="glycosylation site" description="N-linked (GlcNAc...) asparagine" evidence="2">
    <location>
        <position position="258"/>
    </location>
</feature>
<feature type="glycosylation site" description="N-linked (GlcNAc...) asparagine" evidence="2">
    <location>
        <position position="310"/>
    </location>
</feature>
<feature type="glycosylation site" description="N-linked (GlcNAc...) asparagine" evidence="2">
    <location>
        <position position="349"/>
    </location>
</feature>
<feature type="glycosylation site" description="N-linked (GlcNAc...) asparagine" evidence="2">
    <location>
        <position position="359"/>
    </location>
</feature>
<feature type="glycosylation site" description="N-linked (GlcNAc...) asparagine" evidence="2">
    <location>
        <position position="369"/>
    </location>
</feature>
<reference key="1">
    <citation type="journal article" date="2011" name="Nat. Commun.">
        <title>Effector diversification within compartments of the Leptosphaeria maculans genome affected by Repeat-Induced Point mutations.</title>
        <authorList>
            <person name="Rouxel T."/>
            <person name="Grandaubert J."/>
            <person name="Hane J.K."/>
            <person name="Hoede C."/>
            <person name="van de Wouw A.P."/>
            <person name="Couloux A."/>
            <person name="Dominguez V."/>
            <person name="Anthouard V."/>
            <person name="Bally P."/>
            <person name="Bourras S."/>
            <person name="Cozijnsen A.J."/>
            <person name="Ciuffetti L.M."/>
            <person name="Degrave A."/>
            <person name="Dilmaghani A."/>
            <person name="Duret L."/>
            <person name="Fudal I."/>
            <person name="Goodwin S.B."/>
            <person name="Gout L."/>
            <person name="Glaser N."/>
            <person name="Linglin J."/>
            <person name="Kema G.H.J."/>
            <person name="Lapalu N."/>
            <person name="Lawrence C.B."/>
            <person name="May K."/>
            <person name="Meyer M."/>
            <person name="Ollivier B."/>
            <person name="Poulain J."/>
            <person name="Schoch C.L."/>
            <person name="Simon A."/>
            <person name="Spatafora J.W."/>
            <person name="Stachowiak A."/>
            <person name="Turgeon B.G."/>
            <person name="Tyler B.M."/>
            <person name="Vincent D."/>
            <person name="Weissenbach J."/>
            <person name="Amselem J."/>
            <person name="Quesneville H."/>
            <person name="Oliver R.P."/>
            <person name="Wincker P."/>
            <person name="Balesdent M.-H."/>
            <person name="Howlett B.J."/>
        </authorList>
    </citation>
    <scope>NUCLEOTIDE SEQUENCE [LARGE SCALE GENOMIC DNA]</scope>
    <source>
        <strain>JN3 / isolate v23.1.3 / race Av1-4-5-6-7-8</strain>
    </source>
</reference>
<proteinExistence type="inferred from homology"/>
<name>M28P2_LEPMJ</name>
<organism>
    <name type="scientific">Leptosphaeria maculans (strain JN3 / isolate v23.1.3 / race Av1-4-5-6-7-8)</name>
    <name type="common">Blackleg fungus</name>
    <name type="synonym">Phoma lingam</name>
    <dbReference type="NCBI Taxonomy" id="985895"/>
    <lineage>
        <taxon>Eukaryota</taxon>
        <taxon>Fungi</taxon>
        <taxon>Dikarya</taxon>
        <taxon>Ascomycota</taxon>
        <taxon>Pezizomycotina</taxon>
        <taxon>Dothideomycetes</taxon>
        <taxon>Pleosporomycetidae</taxon>
        <taxon>Pleosporales</taxon>
        <taxon>Pleosporineae</taxon>
        <taxon>Leptosphaeriaceae</taxon>
        <taxon>Plenodomus</taxon>
        <taxon>Plenodomus lingam/Leptosphaeria maculans species complex</taxon>
    </lineage>
</organism>
<evidence type="ECO:0000250" key="1"/>
<evidence type="ECO:0000255" key="2"/>
<evidence type="ECO:0000305" key="3"/>
<accession>E5A6Z0</accession>
<dbReference type="EC" id="3.4.-.-"/>
<dbReference type="EMBL" id="FP929135">
    <property type="protein sequence ID" value="CBX99385.1"/>
    <property type="molecule type" value="Genomic_DNA"/>
</dbReference>
<dbReference type="RefSeq" id="XP_003842864.1">
    <property type="nucleotide sequence ID" value="XM_003842816.1"/>
</dbReference>
<dbReference type="SMR" id="E5A6Z0"/>
<dbReference type="STRING" id="985895.E5A6Z0"/>
<dbReference type="EnsemblFungi" id="CBX99385">
    <property type="protein sequence ID" value="CBX99385"/>
    <property type="gene ID" value="LEMA_P086240.1"/>
</dbReference>
<dbReference type="VEuPathDB" id="FungiDB:LEMA_P086240.1"/>
<dbReference type="eggNOG" id="KOG2195">
    <property type="taxonomic scope" value="Eukaryota"/>
</dbReference>
<dbReference type="HOGENOM" id="CLU_047420_0_0_1"/>
<dbReference type="InParanoid" id="E5A6Z0"/>
<dbReference type="OMA" id="NNDMIGN"/>
<dbReference type="OrthoDB" id="10013407at2759"/>
<dbReference type="Proteomes" id="UP000002668">
    <property type="component" value="Genome"/>
</dbReference>
<dbReference type="GO" id="GO:0005576">
    <property type="term" value="C:extracellular region"/>
    <property type="evidence" value="ECO:0007669"/>
    <property type="project" value="UniProtKB-SubCell"/>
</dbReference>
<dbReference type="GO" id="GO:0046872">
    <property type="term" value="F:metal ion binding"/>
    <property type="evidence" value="ECO:0007669"/>
    <property type="project" value="UniProtKB-KW"/>
</dbReference>
<dbReference type="GO" id="GO:0008235">
    <property type="term" value="F:metalloexopeptidase activity"/>
    <property type="evidence" value="ECO:0007669"/>
    <property type="project" value="InterPro"/>
</dbReference>
<dbReference type="GO" id="GO:0006508">
    <property type="term" value="P:proteolysis"/>
    <property type="evidence" value="ECO:0007669"/>
    <property type="project" value="UniProtKB-KW"/>
</dbReference>
<dbReference type="CDD" id="cd05642">
    <property type="entry name" value="M28_like"/>
    <property type="match status" value="1"/>
</dbReference>
<dbReference type="Gene3D" id="3.40.630.10">
    <property type="entry name" value="Zn peptidases"/>
    <property type="match status" value="1"/>
</dbReference>
<dbReference type="InterPro" id="IPR045175">
    <property type="entry name" value="M28_fam"/>
</dbReference>
<dbReference type="InterPro" id="IPR007484">
    <property type="entry name" value="Peptidase_M28"/>
</dbReference>
<dbReference type="PANTHER" id="PTHR12147">
    <property type="entry name" value="METALLOPEPTIDASE M28 FAMILY MEMBER"/>
    <property type="match status" value="1"/>
</dbReference>
<dbReference type="PANTHER" id="PTHR12147:SF26">
    <property type="entry name" value="PEPTIDASE M28 DOMAIN-CONTAINING PROTEIN"/>
    <property type="match status" value="1"/>
</dbReference>
<dbReference type="Pfam" id="PF04389">
    <property type="entry name" value="Peptidase_M28"/>
    <property type="match status" value="1"/>
</dbReference>
<dbReference type="SUPFAM" id="SSF53187">
    <property type="entry name" value="Zn-dependent exopeptidases"/>
    <property type="match status" value="1"/>
</dbReference>
<gene>
    <name type="ORF">Lema_P086240</name>
</gene>
<sequence length="431" mass="46863">MGIGLVRPAPEEEIQAMVEEISASNIEAIITKLVSFGTRHTLSQQNSSTYGIGAARDWIAAEMRRYAGDSEGRMSVVVQSYVQPVASRIPFPVRISNVVATVRGSEEPERVYVMTGHYDSRVTDVMDYTSDAPGANDDASGTAIAMELARILAKRRPRSTIILAAVAGEEQGLYGAGYLAGTLKNSSTNVEGMLNCDIVGSSTGDRGQRDPFTIRAFAQGPPSYESATVAARRLQIGGENDSPARELARFSAEVAANNVTGMNVAIIYRLDRFLRGGDHTPFLTAGYPAIRYTEPNENFDHQHQDLRTENGTVYGDLIEFVDFKYTARVGKVNLATLWSLSEAPGMPRNVTIDTTVLDNDTRLKWIVSNSTAVASYEVVWRSTTASLWTKMLDVGKVGEVTLPLSKDNMIFGVRSVGINSKKSPAVYPFPG</sequence>
<comment type="cofactor">
    <cofactor evidence="1">
        <name>Zn(2+)</name>
        <dbReference type="ChEBI" id="CHEBI:29105"/>
    </cofactor>
    <text evidence="1">Binds 2 Zn(2+) ions per subunit.</text>
</comment>
<comment type="subcellular location">
    <subcellularLocation>
        <location evidence="3">Secreted</location>
    </subcellularLocation>
</comment>
<comment type="similarity">
    <text evidence="3">Belongs to the peptidase M28 family. M28B subfamily.</text>
</comment>
<protein>
    <recommendedName>
        <fullName>Probable zinc metalloprotease Lema_P086240</fullName>
        <ecNumber>3.4.-.-</ecNumber>
    </recommendedName>
</protein>
<keyword id="KW-0325">Glycoprotein</keyword>
<keyword id="KW-0378">Hydrolase</keyword>
<keyword id="KW-0479">Metal-binding</keyword>
<keyword id="KW-0482">Metalloprotease</keyword>
<keyword id="KW-0645">Protease</keyword>
<keyword id="KW-1185">Reference proteome</keyword>
<keyword id="KW-0964">Secreted</keyword>
<keyword id="KW-0732">Signal</keyword>
<keyword id="KW-0862">Zinc</keyword>